<feature type="chain" id="PRO_1000056000" description="Large ribosomal subunit protein uL30">
    <location>
        <begin position="1"/>
        <end position="64"/>
    </location>
</feature>
<feature type="region of interest" description="Disordered" evidence="2">
    <location>
        <begin position="1"/>
        <end position="22"/>
    </location>
</feature>
<sequence length="64" mass="7129">MSEQVKRVRVTQVGSPIGRKPGQKETLIGLGLHRMNASRELAATPETLGRIRKVKHLLKVEELS</sequence>
<accession>A5FZU7</accession>
<protein>
    <recommendedName>
        <fullName evidence="1">Large ribosomal subunit protein uL30</fullName>
    </recommendedName>
    <alternativeName>
        <fullName evidence="3">50S ribosomal protein L30</fullName>
    </alternativeName>
</protein>
<comment type="subunit">
    <text evidence="1">Part of the 50S ribosomal subunit.</text>
</comment>
<comment type="similarity">
    <text evidence="1">Belongs to the universal ribosomal protein uL30 family.</text>
</comment>
<organism>
    <name type="scientific">Acidiphilium cryptum (strain JF-5)</name>
    <dbReference type="NCBI Taxonomy" id="349163"/>
    <lineage>
        <taxon>Bacteria</taxon>
        <taxon>Pseudomonadati</taxon>
        <taxon>Pseudomonadota</taxon>
        <taxon>Alphaproteobacteria</taxon>
        <taxon>Acetobacterales</taxon>
        <taxon>Acidocellaceae</taxon>
        <taxon>Acidiphilium</taxon>
    </lineage>
</organism>
<evidence type="ECO:0000255" key="1">
    <source>
        <dbReference type="HAMAP-Rule" id="MF_01371"/>
    </source>
</evidence>
<evidence type="ECO:0000256" key="2">
    <source>
        <dbReference type="SAM" id="MobiDB-lite"/>
    </source>
</evidence>
<evidence type="ECO:0000305" key="3"/>
<dbReference type="EMBL" id="CP000697">
    <property type="protein sequence ID" value="ABQ31129.1"/>
    <property type="molecule type" value="Genomic_DNA"/>
</dbReference>
<dbReference type="RefSeq" id="WP_007424191.1">
    <property type="nucleotide sequence ID" value="NC_009484.1"/>
</dbReference>
<dbReference type="SMR" id="A5FZU7"/>
<dbReference type="STRING" id="349163.Acry_1928"/>
<dbReference type="KEGG" id="acr:Acry_1928"/>
<dbReference type="eggNOG" id="COG1841">
    <property type="taxonomic scope" value="Bacteria"/>
</dbReference>
<dbReference type="HOGENOM" id="CLU_131047_1_2_5"/>
<dbReference type="Proteomes" id="UP000000245">
    <property type="component" value="Chromosome"/>
</dbReference>
<dbReference type="GO" id="GO:0022625">
    <property type="term" value="C:cytosolic large ribosomal subunit"/>
    <property type="evidence" value="ECO:0007669"/>
    <property type="project" value="TreeGrafter"/>
</dbReference>
<dbReference type="GO" id="GO:0003735">
    <property type="term" value="F:structural constituent of ribosome"/>
    <property type="evidence" value="ECO:0007669"/>
    <property type="project" value="InterPro"/>
</dbReference>
<dbReference type="GO" id="GO:0006412">
    <property type="term" value="P:translation"/>
    <property type="evidence" value="ECO:0007669"/>
    <property type="project" value="UniProtKB-UniRule"/>
</dbReference>
<dbReference type="CDD" id="cd01658">
    <property type="entry name" value="Ribosomal_L30"/>
    <property type="match status" value="1"/>
</dbReference>
<dbReference type="Gene3D" id="3.30.1390.20">
    <property type="entry name" value="Ribosomal protein L30, ferredoxin-like fold domain"/>
    <property type="match status" value="1"/>
</dbReference>
<dbReference type="HAMAP" id="MF_01371_B">
    <property type="entry name" value="Ribosomal_uL30_B"/>
    <property type="match status" value="1"/>
</dbReference>
<dbReference type="InterPro" id="IPR036919">
    <property type="entry name" value="Ribo_uL30_ferredoxin-like_sf"/>
</dbReference>
<dbReference type="InterPro" id="IPR005996">
    <property type="entry name" value="Ribosomal_uL30_bac-type"/>
</dbReference>
<dbReference type="InterPro" id="IPR016082">
    <property type="entry name" value="Ribosomal_uL30_ferredoxin-like"/>
</dbReference>
<dbReference type="NCBIfam" id="TIGR01308">
    <property type="entry name" value="rpmD_bact"/>
    <property type="match status" value="1"/>
</dbReference>
<dbReference type="PANTHER" id="PTHR15892:SF2">
    <property type="entry name" value="LARGE RIBOSOMAL SUBUNIT PROTEIN UL30M"/>
    <property type="match status" value="1"/>
</dbReference>
<dbReference type="PANTHER" id="PTHR15892">
    <property type="entry name" value="MITOCHONDRIAL RIBOSOMAL PROTEIN L30"/>
    <property type="match status" value="1"/>
</dbReference>
<dbReference type="Pfam" id="PF00327">
    <property type="entry name" value="Ribosomal_L30"/>
    <property type="match status" value="1"/>
</dbReference>
<dbReference type="PIRSF" id="PIRSF002211">
    <property type="entry name" value="Ribosomal_L30_bac-type"/>
    <property type="match status" value="1"/>
</dbReference>
<dbReference type="SUPFAM" id="SSF55129">
    <property type="entry name" value="Ribosomal protein L30p/L7e"/>
    <property type="match status" value="1"/>
</dbReference>
<keyword id="KW-1185">Reference proteome</keyword>
<keyword id="KW-0687">Ribonucleoprotein</keyword>
<keyword id="KW-0689">Ribosomal protein</keyword>
<reference key="1">
    <citation type="submission" date="2007-05" db="EMBL/GenBank/DDBJ databases">
        <title>Complete sequence of chromosome of Acidiphilium cryptum JF-5.</title>
        <authorList>
            <consortium name="US DOE Joint Genome Institute"/>
            <person name="Copeland A."/>
            <person name="Lucas S."/>
            <person name="Lapidus A."/>
            <person name="Barry K."/>
            <person name="Detter J.C."/>
            <person name="Glavina del Rio T."/>
            <person name="Hammon N."/>
            <person name="Israni S."/>
            <person name="Dalin E."/>
            <person name="Tice H."/>
            <person name="Pitluck S."/>
            <person name="Sims D."/>
            <person name="Brettin T."/>
            <person name="Bruce D."/>
            <person name="Han C."/>
            <person name="Schmutz J."/>
            <person name="Larimer F."/>
            <person name="Land M."/>
            <person name="Hauser L."/>
            <person name="Kyrpides N."/>
            <person name="Kim E."/>
            <person name="Magnuson T."/>
            <person name="Richardson P."/>
        </authorList>
    </citation>
    <scope>NUCLEOTIDE SEQUENCE [LARGE SCALE GENOMIC DNA]</scope>
    <source>
        <strain>JF-5</strain>
    </source>
</reference>
<name>RL30_ACICJ</name>
<gene>
    <name evidence="1" type="primary">rpmD</name>
    <name type="ordered locus">Acry_1928</name>
</gene>
<proteinExistence type="inferred from homology"/>